<gene>
    <name type="primary">Fanca</name>
</gene>
<protein>
    <recommendedName>
        <fullName>Fanconi anemia group A protein homolog</fullName>
        <shortName>Protein FACA</shortName>
    </recommendedName>
</protein>
<dbReference type="EMBL" id="AF208116">
    <property type="protein sequence ID" value="AAF63963.1"/>
    <property type="molecule type" value="mRNA"/>
</dbReference>
<dbReference type="EMBL" id="AF208117">
    <property type="protein sequence ID" value="AAF63964.1"/>
    <property type="molecule type" value="mRNA"/>
</dbReference>
<dbReference type="EMBL" id="AF208118">
    <property type="protein sequence ID" value="AAF63965.1"/>
    <property type="molecule type" value="mRNA"/>
</dbReference>
<dbReference type="EMBL" id="AF208120">
    <property type="protein sequence ID" value="AAF63966.1"/>
    <property type="molecule type" value="mRNA"/>
</dbReference>
<dbReference type="EMBL" id="AF208121">
    <property type="protein sequence ID" value="AAF63967.1"/>
    <property type="molecule type" value="mRNA"/>
</dbReference>
<dbReference type="EMBL" id="AF208122">
    <property type="protein sequence ID" value="AAF63968.1"/>
    <property type="molecule type" value="mRNA"/>
</dbReference>
<dbReference type="EMBL" id="AF208123">
    <property type="protein sequence ID" value="AAF63969.1"/>
    <property type="molecule type" value="mRNA"/>
</dbReference>
<dbReference type="EMBL" id="AF178934">
    <property type="protein sequence ID" value="AAG01633.1"/>
    <property type="molecule type" value="mRNA"/>
</dbReference>
<dbReference type="EMBL" id="AF230373">
    <property type="protein sequence ID" value="AAG02637.1"/>
    <property type="molecule type" value="Genomic_DNA"/>
</dbReference>
<dbReference type="EMBL" id="AC155810">
    <property type="status" value="NOT_ANNOTATED_CDS"/>
    <property type="molecule type" value="Genomic_DNA"/>
</dbReference>
<dbReference type="EMBL" id="AF247181">
    <property type="protein sequence ID" value="AAG00417.1"/>
    <property type="molecule type" value="Genomic_DNA"/>
</dbReference>
<dbReference type="CCDS" id="CCDS22753.1"/>
<dbReference type="RefSeq" id="NP_058621.2">
    <property type="nucleotide sequence ID" value="NM_016925.4"/>
</dbReference>
<dbReference type="SMR" id="Q9JL70"/>
<dbReference type="BioGRID" id="199591">
    <property type="interactions" value="2"/>
</dbReference>
<dbReference type="FunCoup" id="Q9JL70">
    <property type="interactions" value="2475"/>
</dbReference>
<dbReference type="STRING" id="10090.ENSMUSP00000045217"/>
<dbReference type="GlyGen" id="Q9JL70">
    <property type="glycosylation" value="2 sites, 1 O-linked glycan (2 sites)"/>
</dbReference>
<dbReference type="iPTMnet" id="Q9JL70"/>
<dbReference type="PhosphoSitePlus" id="Q9JL70"/>
<dbReference type="jPOST" id="Q9JL70"/>
<dbReference type="PaxDb" id="10090-ENSMUSP00000045217"/>
<dbReference type="ProteomicsDB" id="277038"/>
<dbReference type="Pumba" id="Q9JL70"/>
<dbReference type="Antibodypedia" id="30916">
    <property type="antibodies" value="425 antibodies from 40 providers"/>
</dbReference>
<dbReference type="DNASU" id="14087"/>
<dbReference type="Ensembl" id="ENSMUST00000035495.15">
    <property type="protein sequence ID" value="ENSMUSP00000045217.9"/>
    <property type="gene ID" value="ENSMUSG00000032815.17"/>
</dbReference>
<dbReference type="GeneID" id="14087"/>
<dbReference type="KEGG" id="mmu:14087"/>
<dbReference type="UCSC" id="uc009nve.2">
    <property type="organism name" value="mouse"/>
</dbReference>
<dbReference type="AGR" id="MGI:1341823"/>
<dbReference type="CTD" id="2175"/>
<dbReference type="MGI" id="MGI:1341823">
    <property type="gene designation" value="Fanca"/>
</dbReference>
<dbReference type="VEuPathDB" id="HostDB:ENSMUSG00000032815"/>
<dbReference type="eggNOG" id="ENOG502QT8N">
    <property type="taxonomic scope" value="Eukaryota"/>
</dbReference>
<dbReference type="GeneTree" id="ENSGT00390000007852"/>
<dbReference type="HOGENOM" id="CLU_005268_0_0_1"/>
<dbReference type="InParanoid" id="Q9JL70"/>
<dbReference type="OMA" id="AIPHCPA"/>
<dbReference type="OrthoDB" id="2287188at2759"/>
<dbReference type="PhylomeDB" id="Q9JL70"/>
<dbReference type="TreeFam" id="TF333412"/>
<dbReference type="Reactome" id="R-MMU-6783310">
    <property type="pathway name" value="Fanconi Anemia Pathway"/>
</dbReference>
<dbReference type="Reactome" id="R-MMU-9833482">
    <property type="pathway name" value="PKR-mediated signaling"/>
</dbReference>
<dbReference type="BioGRID-ORCS" id="14087">
    <property type="hits" value="26 hits in 115 CRISPR screens"/>
</dbReference>
<dbReference type="ChiTaRS" id="Fanca">
    <property type="organism name" value="mouse"/>
</dbReference>
<dbReference type="PRO" id="PR:Q9JL70"/>
<dbReference type="Proteomes" id="UP000000589">
    <property type="component" value="Chromosome 8"/>
</dbReference>
<dbReference type="RNAct" id="Q9JL70">
    <property type="molecule type" value="protein"/>
</dbReference>
<dbReference type="Bgee" id="ENSMUSG00000032815">
    <property type="expression patterns" value="Expressed in granulocyte and 164 other cell types or tissues"/>
</dbReference>
<dbReference type="ExpressionAtlas" id="Q9JL70">
    <property type="expression patterns" value="baseline and differential"/>
</dbReference>
<dbReference type="GO" id="GO:0000785">
    <property type="term" value="C:chromatin"/>
    <property type="evidence" value="ECO:0007669"/>
    <property type="project" value="Ensembl"/>
</dbReference>
<dbReference type="GO" id="GO:0005737">
    <property type="term" value="C:cytoplasm"/>
    <property type="evidence" value="ECO:0007669"/>
    <property type="project" value="UniProtKB-SubCell"/>
</dbReference>
<dbReference type="GO" id="GO:0043240">
    <property type="term" value="C:Fanconi anaemia nuclear complex"/>
    <property type="evidence" value="ECO:0000250"/>
    <property type="project" value="UniProtKB"/>
</dbReference>
<dbReference type="GO" id="GO:0005654">
    <property type="term" value="C:nucleoplasm"/>
    <property type="evidence" value="ECO:0007669"/>
    <property type="project" value="Ensembl"/>
</dbReference>
<dbReference type="GO" id="GO:0008585">
    <property type="term" value="P:female gonad development"/>
    <property type="evidence" value="ECO:0000315"/>
    <property type="project" value="MGI"/>
</dbReference>
<dbReference type="GO" id="GO:0036297">
    <property type="term" value="P:interstrand cross-link repair"/>
    <property type="evidence" value="ECO:0007669"/>
    <property type="project" value="InterPro"/>
</dbReference>
<dbReference type="GO" id="GO:0008584">
    <property type="term" value="P:male gonad development"/>
    <property type="evidence" value="ECO:0000315"/>
    <property type="project" value="MGI"/>
</dbReference>
<dbReference type="GO" id="GO:0007140">
    <property type="term" value="P:male meiotic nuclear division"/>
    <property type="evidence" value="ECO:0000315"/>
    <property type="project" value="MGI"/>
</dbReference>
<dbReference type="GO" id="GO:2000348">
    <property type="term" value="P:regulation of CD40 signaling pathway"/>
    <property type="evidence" value="ECO:0000315"/>
    <property type="project" value="MGI"/>
</dbReference>
<dbReference type="GO" id="GO:1905936">
    <property type="term" value="P:regulation of germ cell proliferation"/>
    <property type="evidence" value="ECO:0000315"/>
    <property type="project" value="MGI"/>
</dbReference>
<dbReference type="GO" id="GO:0050727">
    <property type="term" value="P:regulation of inflammatory response"/>
    <property type="evidence" value="ECO:0000315"/>
    <property type="project" value="MGI"/>
</dbReference>
<dbReference type="GO" id="GO:0045589">
    <property type="term" value="P:regulation of regulatory T cell differentiation"/>
    <property type="evidence" value="ECO:0000315"/>
    <property type="project" value="MGI"/>
</dbReference>
<dbReference type="InterPro" id="IPR003516">
    <property type="entry name" value="FANCA"/>
</dbReference>
<dbReference type="InterPro" id="IPR055387">
    <property type="entry name" value="FANCA_arcN"/>
</dbReference>
<dbReference type="InterPro" id="IPR055386">
    <property type="entry name" value="FANCA_helical"/>
</dbReference>
<dbReference type="InterPro" id="IPR055277">
    <property type="entry name" value="Fanconi_A_C"/>
</dbReference>
<dbReference type="InterPro" id="IPR031729">
    <property type="entry name" value="Fanconi_A_N"/>
</dbReference>
<dbReference type="PANTHER" id="PTHR12047">
    <property type="entry name" value="FANCONI ANEMIA GROUP A PROTEIN"/>
    <property type="match status" value="1"/>
</dbReference>
<dbReference type="PANTHER" id="PTHR12047:SF2">
    <property type="entry name" value="FANCONI ANEMIA GROUP A PROTEIN"/>
    <property type="match status" value="1"/>
</dbReference>
<dbReference type="Pfam" id="PF24783">
    <property type="entry name" value="FANCA_arcN"/>
    <property type="match status" value="1"/>
</dbReference>
<dbReference type="Pfam" id="PF03511">
    <property type="entry name" value="FANCA_CTD"/>
    <property type="match status" value="1"/>
</dbReference>
<dbReference type="Pfam" id="PF24781">
    <property type="entry name" value="FANCA_helical"/>
    <property type="match status" value="1"/>
</dbReference>
<dbReference type="Pfam" id="PF15865">
    <property type="entry name" value="Fanconi_A_N"/>
    <property type="match status" value="1"/>
</dbReference>
<dbReference type="PRINTS" id="PR00826">
    <property type="entry name" value="FANCONIAGENE"/>
</dbReference>
<organism>
    <name type="scientific">Mus musculus</name>
    <name type="common">Mouse</name>
    <dbReference type="NCBI Taxonomy" id="10090"/>
    <lineage>
        <taxon>Eukaryota</taxon>
        <taxon>Metazoa</taxon>
        <taxon>Chordata</taxon>
        <taxon>Craniata</taxon>
        <taxon>Vertebrata</taxon>
        <taxon>Euteleostomi</taxon>
        <taxon>Mammalia</taxon>
        <taxon>Eutheria</taxon>
        <taxon>Euarchontoglires</taxon>
        <taxon>Glires</taxon>
        <taxon>Rodentia</taxon>
        <taxon>Myomorpha</taxon>
        <taxon>Muroidea</taxon>
        <taxon>Muridae</taxon>
        <taxon>Murinae</taxon>
        <taxon>Mus</taxon>
        <taxon>Mus</taxon>
    </lineage>
</organism>
<evidence type="ECO:0000250" key="1"/>
<evidence type="ECO:0000255" key="2"/>
<evidence type="ECO:0000256" key="3">
    <source>
        <dbReference type="SAM" id="MobiDB-lite"/>
    </source>
</evidence>
<evidence type="ECO:0000269" key="4">
    <source>
    </source>
</evidence>
<evidence type="ECO:0000305" key="5"/>
<sequence>MPGSPARGAAMGGGPRGLRKTWTELLAGRVKKQKYDPEREQKLKDSALKLLRYHQNMHDLLLEVEEPQCKRLRLSELIDRDSADASSDRSASFIRSAFRDQASRLGVPVGVLSAKVFARSVQQVCVEPSHPVLLSPEQSKKLSSLLMIARHLLAQNMFSRLTFCQELWKAQNSLLLEAMWRLHTHSVVSLQELLQSHPDSEAMAMWLFRNLRSLCEQIGASCPSPDTTEAMLSGLVQLLISRGFQGSSDPRRLVEPERLPQVATDVLQRMLAFSLDTLEADPQTTLDCQAVSGWIPIYSGHTCCGVVTENSLKSFFSHTLTQILTHKPVLKVSDAIQMQKEWSFAKTHHLLTDLHCRVLATLGPEESVGRLQEVLEMQEVNWQHVLSCVSTLVVCFPEAQQLVKGWVASLMARAFESYHLDSMVTAFLIVRQATLEGPYVFPSYADWFKESFGSSHGYHSCSKKTLVFLFKFLSDLVPWEAPRYMQVHIFHPPLVPSKYHSLLTDYISLAKTRLADLKVSLENVGLYEDLSSPGDIAERESQAVQDVKKAIMVFEQTGKIPMPVLEASIFRRPYYVSHFLPTLLAPRVLPEVPDPRVALIETLKRADKIPSSIYDAYRKACASAEKQQPENATSAQRTEADCAKEPLGLLTAALEELRALMTDPTQYSVISAQVAVVSEKLNAVLGHRNDGGSLQRAKIQLSVLPSTLQKQDQAVVDLLLTAFCQNLMAASSFVPPERQSPWAVLFVRTLCGHVLLPAVLTRLRQLLRHQGQSLSTSHVLGLAALAVHLGECRSMLPEVDPDVLAPSAGSLCVPDFLNSLLTCRTRDSLLFCMNFCTAAVSYCLCKFSALRNCLSPGLIKKFQFVVLRLFPEARAPCAPEHAACVPWRPLYLPSADWQRAALSLWRRDSFQELLKDKEFYLTYRDWVQLELEIQPEADVLSDMERHDFHQWAIYERYLPAPTALGGCGGDLEEACTVLVSEIMDFHQSSRSYNHSEDSDLVLGGRTGNKDILSRLQEIALDLELDQGSAVPHGCSTPQSHFLFRVFRRRLQALARPDSMATSLRRQQELLTCKRLLLCLPPSVLVGGPQAGQPISPNCGEFFSLVNSELRNFCCHGSVLTSDITIHFFRGLLRVCLRSQDPALVANQTLTECQTKCPVILTSALLWWSSLEPVLCGRWMRCYQSPLPRELRRLQEAREFASNFASASASPAPSPAWIAAAALHFAWRGVRKEDVTAHLQRLDCQREELLIALFFFSLMGLLSSYLTQRDTAEHLKAVDICAEVLTCLERRKVSWLVLFQLTEKDAKLGHLLHLAPDQHTRLLPLAFYSLLSCFSEGAAVREAAFLHVAVDMYLKLLQLFVDGETRLQGHSESQGSPVQLITKARVFLLQLIPQCPKQCFSNMTELLAGRGDCDPEVSNALRQRQQADPSFDLYQEPQLF</sequence>
<feature type="chain" id="PRO_0000087180" description="Fanconi anemia group A protein homolog">
    <location>
        <begin position="1"/>
        <end position="1439"/>
    </location>
</feature>
<feature type="region of interest" description="Disordered" evidence="3">
    <location>
        <begin position="1"/>
        <end position="20"/>
    </location>
</feature>
<feature type="short sequence motif" description="Nuclear localization signal" evidence="2">
    <location>
        <begin position="19"/>
        <end position="35"/>
    </location>
</feature>
<feature type="sequence conflict" description="In Ref. 2; AAG01633." evidence="5" ref="2">
    <original>P</original>
    <variation>L</variation>
    <location>
        <position position="2"/>
    </location>
</feature>
<feature type="sequence conflict" description="In Ref. 2; AAG01633." evidence="5" ref="2">
    <original>P</original>
    <variation>S</variation>
    <location>
        <position position="15"/>
    </location>
</feature>
<feature type="sequence conflict" description="In Ref. 2; AAG01633." evidence="5" ref="2">
    <original>L</original>
    <variation>V</variation>
    <location>
        <position position="43"/>
    </location>
</feature>
<feature type="sequence conflict" description="In Ref. 2; AAG01633." evidence="5" ref="2">
    <original>R</original>
    <variation>F</variation>
    <location>
        <position position="80"/>
    </location>
</feature>
<feature type="sequence conflict" description="In Ref. 1; AAF63969." evidence="5" ref="1">
    <original>VP</original>
    <variation>SS</variation>
    <location>
        <begin position="107"/>
        <end position="108"/>
    </location>
</feature>
<feature type="sequence conflict" description="In Ref. 1; AAF63969." evidence="5" ref="1">
    <original>G</original>
    <variation>GG</variation>
    <location>
        <position position="110"/>
    </location>
</feature>
<feature type="sequence conflict" description="In Ref. 1; AAF63963/AAF63964 and 2; AAG01633." evidence="5" ref="1 2">
    <original>M</original>
    <variation>V</variation>
    <location>
        <position position="147"/>
    </location>
</feature>
<feature type="sequence conflict" description="In Ref. 1; AAF63965." evidence="5" ref="1">
    <original>S</original>
    <variation>L</variation>
    <location>
        <position position="241"/>
    </location>
</feature>
<feature type="sequence conflict" description="In Ref. 1; AAF63965." evidence="5" ref="1">
    <original>V</original>
    <variation>I</variation>
    <location>
        <position position="254"/>
    </location>
</feature>
<feature type="sequence conflict" description="In Ref. 2; AAG01633." evidence="5" ref="2">
    <original>L</original>
    <variation>I</variation>
    <location>
        <position position="275"/>
    </location>
</feature>
<feature type="sequence conflict" description="In Ref. 2; AAG01633." evidence="5" ref="2">
    <original>EADPQTTLDC</original>
    <variation>GGEPKTNLGW</variation>
    <location>
        <begin position="279"/>
        <end position="288"/>
    </location>
</feature>
<feature type="sequence conflict" description="In Ref. 2; AAG01633." evidence="5" ref="2">
    <original>SGW</original>
    <variation>GGR</variation>
    <location>
        <begin position="292"/>
        <end position="294"/>
    </location>
</feature>
<feature type="sequence conflict" description="In Ref. 1; AAF63963/AAF63964 and 2; AAG01633." evidence="5" ref="1 2">
    <original>N</original>
    <variation>D</variation>
    <location>
        <position position="310"/>
    </location>
</feature>
<feature type="sequence conflict" description="In Ref. 1; AAF63963/AAF63964 and 2; AAG01633." evidence="5" ref="1 2">
    <original>I</original>
    <variation>T</variation>
    <location>
        <position position="323"/>
    </location>
</feature>
<feature type="sequence conflict" description="In Ref. 1; AAF63963/AAF63964/AAF63965." evidence="5" ref="1">
    <original>V</original>
    <variation>G</variation>
    <location>
        <position position="424"/>
    </location>
</feature>
<feature type="sequence conflict" description="In Ref. 2; AAG01633." evidence="5" ref="2">
    <original>F</original>
    <variation>L</variation>
    <location>
        <position position="490"/>
    </location>
</feature>
<feature type="sequence conflict" description="In Ref. 1; AAF63963/AAF63964." evidence="5" ref="1">
    <original>L</original>
    <variation>F</variation>
    <location>
        <position position="599"/>
    </location>
</feature>
<feature type="sequence conflict" description="In Ref. 1; AAF63964." evidence="5" ref="1">
    <original>M</original>
    <variation>V</variation>
    <location>
        <position position="833"/>
    </location>
</feature>
<feature type="sequence conflict" description="In Ref. 1; AAF63964." evidence="5" ref="1">
    <original>FQFVVLRL</original>
    <variation>VRVSHSSF</variation>
    <location>
        <begin position="862"/>
        <end position="869"/>
    </location>
</feature>
<feature type="sequence conflict" description="In Ref. 2; AAG01633." evidence="5" ref="2">
    <original>R</original>
    <variation>Q</variation>
    <location>
        <position position="1049"/>
    </location>
</feature>
<feature type="sequence conflict" description="In Ref. 4; AAG00417." evidence="5" ref="4">
    <original>I</original>
    <variation>V</variation>
    <location>
        <position position="1159"/>
    </location>
</feature>
<accession>Q9JL70</accession>
<accession>E9QKQ4</accession>
<accession>Q9ESU9</accession>
<accession>Q9ESV3</accession>
<accession>Q9ET44</accession>
<accession>Q9JL64</accession>
<accession>Q9JL65</accession>
<accession>Q9JL66</accession>
<accession>Q9JL67</accession>
<accession>Q9JL68</accession>
<accession>Q9JL69</accession>
<reference key="1">
    <citation type="journal article" date="2000" name="Mamm. Genome">
        <title>Cloning and characterization of murine Fanconi anemia group A gene: Fanca protein is expressed in lymphoid tissues, testis, and ovary.</title>
        <authorList>
            <person name="Van de Vrugt H.J."/>
            <person name="Cheng N.C."/>
            <person name="De Vries Y."/>
            <person name="Rooimans M.A."/>
            <person name="De Groot J."/>
            <person name="Scheper R.J."/>
            <person name="Zhi Y."/>
            <person name="Hoatlin M.E."/>
            <person name="Joenje H."/>
            <person name="Arwert F."/>
        </authorList>
    </citation>
    <scope>NUCLEOTIDE SEQUENCE [MRNA]</scope>
    <scope>TISSUE SPECIFICITY</scope>
</reference>
<reference key="2">
    <citation type="journal article" date="2000" name="Genomics">
        <title>Cloning and analysis of the mouse Fanconi anemia group A cDNA and an overlapping penta zinc finger cDNA.</title>
        <authorList>
            <person name="Wong J.C."/>
            <person name="Alon N."/>
            <person name="Norga K."/>
            <person name="Kruyt F.A.E."/>
            <person name="Youssoufian H."/>
            <person name="Buchwald M."/>
        </authorList>
    </citation>
    <scope>NUCLEOTIDE SEQUENCE [GENOMIC DNA / MRNA]</scope>
    <source>
        <strain>129/SvEvTacfBr</strain>
        <strain>C57BL/6J</strain>
    </source>
</reference>
<reference key="3">
    <citation type="journal article" date="2009" name="PLoS Biol.">
        <title>Lineage-specific biology revealed by a finished genome assembly of the mouse.</title>
        <authorList>
            <person name="Church D.M."/>
            <person name="Goodstadt L."/>
            <person name="Hillier L.W."/>
            <person name="Zody M.C."/>
            <person name="Goldstein S."/>
            <person name="She X."/>
            <person name="Bult C.J."/>
            <person name="Agarwala R."/>
            <person name="Cherry J.L."/>
            <person name="DiCuccio M."/>
            <person name="Hlavina W."/>
            <person name="Kapustin Y."/>
            <person name="Meric P."/>
            <person name="Maglott D."/>
            <person name="Birtle Z."/>
            <person name="Marques A.C."/>
            <person name="Graves T."/>
            <person name="Zhou S."/>
            <person name="Teague B."/>
            <person name="Potamousis K."/>
            <person name="Churas C."/>
            <person name="Place M."/>
            <person name="Herschleb J."/>
            <person name="Runnheim R."/>
            <person name="Forrest D."/>
            <person name="Amos-Landgraf J."/>
            <person name="Schwartz D.C."/>
            <person name="Cheng Z."/>
            <person name="Lindblad-Toh K."/>
            <person name="Eichler E.E."/>
            <person name="Ponting C.P."/>
        </authorList>
    </citation>
    <scope>NUCLEOTIDE SEQUENCE [LARGE SCALE GENOMIC DNA]</scope>
    <source>
        <strain>C57BL/6J</strain>
    </source>
</reference>
<reference key="4">
    <citation type="submission" date="2000-03" db="EMBL/GenBank/DDBJ databases">
        <title>Partial sequence of the murine Fanca gene.</title>
        <authorList>
            <person name="Hildebrand G."/>
            <person name="Digweed M."/>
        </authorList>
    </citation>
    <scope>NUCLEOTIDE SEQUENCE [GENOMIC DNA] OF 1130-1439</scope>
</reference>
<comment type="function">
    <text evidence="1">DNA repair protein that may operate in a postreplication repair or a cell cycle checkpoint function. May be involved in interstrand DNA cross-link repair and in the maintenance of normal chromosome stability (By similarity).</text>
</comment>
<comment type="subunit">
    <text evidence="1">Belongs to the multisubunit FA complex composed of FANCA, FANCB, FANCC, FANCE, FANCF, FANCG, FANCL/PHF9 and FANCM (By similarity). In complex with FANCF, FANCG and FANCL, but not with FANCC, nor FANCE, interacts with HES1; this interaction may be essential for the stability and nuclear localization of FA core complex proteins (By similarity). The complex with FANCC and FANCG may also include EIF2AK2 and HSP70. Interacts with FAAP20; interaction is direct (By similarity).</text>
</comment>
<comment type="subcellular location">
    <subcellularLocation>
        <location evidence="1">Nucleus</location>
    </subcellularLocation>
    <subcellularLocation>
        <location evidence="1">Cytoplasm</location>
    </subcellularLocation>
    <text>The major form is nuclear. The minor form is cytoplasmic.</text>
</comment>
<comment type="tissue specificity">
    <text evidence="4">Mainly expressed in testis and lymphoid tissues like thymus, lymph nodes, and spleen, and at lower levels in kidney and ovary.</text>
</comment>
<comment type="PTM">
    <text evidence="1">Phosphorylated primarily on serine residues. Phosphorylation is required for the formation of the nuclear complex (By similarity).</text>
</comment>
<name>FANCA_MOUSE</name>
<keyword id="KW-0963">Cytoplasm</keyword>
<keyword id="KW-0227">DNA damage</keyword>
<keyword id="KW-0234">DNA repair</keyword>
<keyword id="KW-0539">Nucleus</keyword>
<keyword id="KW-0597">Phosphoprotein</keyword>
<keyword id="KW-1185">Reference proteome</keyword>
<proteinExistence type="evidence at transcript level"/>